<protein>
    <recommendedName>
        <fullName evidence="1">Large ribosomal subunit protein bL34</fullName>
    </recommendedName>
    <alternativeName>
        <fullName>50S ribosomal protein L34</fullName>
    </alternativeName>
</protein>
<gene>
    <name type="primary">rpmH</name>
</gene>
<organism>
    <name type="scientific">Pseudomonas putida</name>
    <name type="common">Arthrobacter siderocapsulatus</name>
    <dbReference type="NCBI Taxonomy" id="303"/>
    <lineage>
        <taxon>Bacteria</taxon>
        <taxon>Pseudomonadati</taxon>
        <taxon>Pseudomonadota</taxon>
        <taxon>Gammaproteobacteria</taxon>
        <taxon>Pseudomonadales</taxon>
        <taxon>Pseudomonadaceae</taxon>
        <taxon>Pseudomonas</taxon>
    </lineage>
</organism>
<name>RL34_PSEPU</name>
<comment type="similarity">
    <text evidence="1">Belongs to the bacterial ribosomal protein bL34 family.</text>
</comment>
<accession>P0A162</accession>
<accession>P16498</accession>
<dbReference type="EMBL" id="X62540">
    <property type="protein sequence ID" value="CAA44414.1"/>
    <property type="molecule type" value="Genomic_DNA"/>
</dbReference>
<dbReference type="EMBL" id="M30126">
    <property type="protein sequence ID" value="AAA25917.2"/>
    <property type="molecule type" value="Genomic_DNA"/>
</dbReference>
<dbReference type="PIR" id="S18090">
    <property type="entry name" value="R6PS34"/>
</dbReference>
<dbReference type="RefSeq" id="WP_003253163.1">
    <property type="nucleotide sequence ID" value="NZ_WOWR01000057.1"/>
</dbReference>
<dbReference type="SMR" id="P0A162"/>
<dbReference type="GeneID" id="97170756"/>
<dbReference type="eggNOG" id="COG0230">
    <property type="taxonomic scope" value="Bacteria"/>
</dbReference>
<dbReference type="OrthoDB" id="9804164at2"/>
<dbReference type="GO" id="GO:1990904">
    <property type="term" value="C:ribonucleoprotein complex"/>
    <property type="evidence" value="ECO:0007669"/>
    <property type="project" value="UniProtKB-KW"/>
</dbReference>
<dbReference type="GO" id="GO:0005840">
    <property type="term" value="C:ribosome"/>
    <property type="evidence" value="ECO:0007669"/>
    <property type="project" value="UniProtKB-KW"/>
</dbReference>
<dbReference type="GO" id="GO:0003735">
    <property type="term" value="F:structural constituent of ribosome"/>
    <property type="evidence" value="ECO:0007669"/>
    <property type="project" value="InterPro"/>
</dbReference>
<dbReference type="GO" id="GO:0006412">
    <property type="term" value="P:translation"/>
    <property type="evidence" value="ECO:0007669"/>
    <property type="project" value="UniProtKB-UniRule"/>
</dbReference>
<dbReference type="FunFam" id="1.10.287.3980:FF:000001">
    <property type="entry name" value="Mitochondrial ribosomal protein L34"/>
    <property type="match status" value="1"/>
</dbReference>
<dbReference type="Gene3D" id="1.10.287.3980">
    <property type="match status" value="1"/>
</dbReference>
<dbReference type="HAMAP" id="MF_00391">
    <property type="entry name" value="Ribosomal_bL34"/>
    <property type="match status" value="1"/>
</dbReference>
<dbReference type="InterPro" id="IPR000271">
    <property type="entry name" value="Ribosomal_bL34"/>
</dbReference>
<dbReference type="InterPro" id="IPR020939">
    <property type="entry name" value="Ribosomal_bL34_CS"/>
</dbReference>
<dbReference type="NCBIfam" id="TIGR01030">
    <property type="entry name" value="rpmH_bact"/>
    <property type="match status" value="1"/>
</dbReference>
<dbReference type="PANTHER" id="PTHR14503:SF4">
    <property type="entry name" value="LARGE RIBOSOMAL SUBUNIT PROTEIN BL34M"/>
    <property type="match status" value="1"/>
</dbReference>
<dbReference type="PANTHER" id="PTHR14503">
    <property type="entry name" value="MITOCHONDRIAL RIBOSOMAL PROTEIN 34 FAMILY MEMBER"/>
    <property type="match status" value="1"/>
</dbReference>
<dbReference type="Pfam" id="PF00468">
    <property type="entry name" value="Ribosomal_L34"/>
    <property type="match status" value="1"/>
</dbReference>
<dbReference type="PROSITE" id="PS00784">
    <property type="entry name" value="RIBOSOMAL_L34"/>
    <property type="match status" value="1"/>
</dbReference>
<sequence>MKRTFQPSTIKRARTHGFRARMATKNGRAVLSRRRAKGRKRLAI</sequence>
<reference key="1">
    <citation type="journal article" date="1992" name="Mol. Microbiol.">
        <title>Genes and their organization in the replication origin region of the bacterial chromosome.</title>
        <authorList>
            <person name="Ogasawara N."/>
            <person name="Yoshikawa H."/>
        </authorList>
    </citation>
    <scope>NUCLEOTIDE SEQUENCE [GENOMIC DNA]</scope>
    <source>
        <strain>TN2100</strain>
    </source>
</reference>
<reference key="2">
    <citation type="journal article" date="1990" name="Proc. Natl. Acad. Sci. U.S.A.">
        <title>Pseudomonas chromosomal replication origins: a bacterial class distinct from Escherichia coli-type origins.</title>
        <authorList>
            <person name="Yee T.W."/>
            <person name="Smith D.W."/>
        </authorList>
    </citation>
    <scope>NUCLEOTIDE SEQUENCE [GENOMIC DNA] OF 1-11</scope>
</reference>
<evidence type="ECO:0000305" key="1"/>
<feature type="chain" id="PRO_0000187444" description="Large ribosomal subunit protein bL34">
    <location>
        <begin position="1"/>
        <end position="44"/>
    </location>
</feature>
<keyword id="KW-0687">Ribonucleoprotein</keyword>
<keyword id="KW-0689">Ribosomal protein</keyword>
<proteinExistence type="inferred from homology"/>